<gene>
    <name evidence="1" type="primary">rpmG1</name>
    <name type="ordered locus">LVIS_0585</name>
</gene>
<evidence type="ECO:0000255" key="1">
    <source>
        <dbReference type="HAMAP-Rule" id="MF_00294"/>
    </source>
</evidence>
<name>RL331_LEVBA</name>
<reference key="1">
    <citation type="journal article" date="2006" name="Proc. Natl. Acad. Sci. U.S.A.">
        <title>Comparative genomics of the lactic acid bacteria.</title>
        <authorList>
            <person name="Makarova K.S."/>
            <person name="Slesarev A."/>
            <person name="Wolf Y.I."/>
            <person name="Sorokin A."/>
            <person name="Mirkin B."/>
            <person name="Koonin E.V."/>
            <person name="Pavlov A."/>
            <person name="Pavlova N."/>
            <person name="Karamychev V."/>
            <person name="Polouchine N."/>
            <person name="Shakhova V."/>
            <person name="Grigoriev I."/>
            <person name="Lou Y."/>
            <person name="Rohksar D."/>
            <person name="Lucas S."/>
            <person name="Huang K."/>
            <person name="Goodstein D.M."/>
            <person name="Hawkins T."/>
            <person name="Plengvidhya V."/>
            <person name="Welker D."/>
            <person name="Hughes J."/>
            <person name="Goh Y."/>
            <person name="Benson A."/>
            <person name="Baldwin K."/>
            <person name="Lee J.-H."/>
            <person name="Diaz-Muniz I."/>
            <person name="Dosti B."/>
            <person name="Smeianov V."/>
            <person name="Wechter W."/>
            <person name="Barabote R."/>
            <person name="Lorca G."/>
            <person name="Altermann E."/>
            <person name="Barrangou R."/>
            <person name="Ganesan B."/>
            <person name="Xie Y."/>
            <person name="Rawsthorne H."/>
            <person name="Tamir D."/>
            <person name="Parker C."/>
            <person name="Breidt F."/>
            <person name="Broadbent J.R."/>
            <person name="Hutkins R."/>
            <person name="O'Sullivan D."/>
            <person name="Steele J."/>
            <person name="Unlu G."/>
            <person name="Saier M.H. Jr."/>
            <person name="Klaenhammer T."/>
            <person name="Richardson P."/>
            <person name="Kozyavkin S."/>
            <person name="Weimer B.C."/>
            <person name="Mills D.A."/>
        </authorList>
    </citation>
    <scope>NUCLEOTIDE SEQUENCE [LARGE SCALE GENOMIC DNA]</scope>
    <source>
        <strain>ATCC 367 / BCRC 12310 / CIP 105137 / JCM 1170 / LMG 11437 / NCIMB 947 / NCTC 947</strain>
    </source>
</reference>
<keyword id="KW-1185">Reference proteome</keyword>
<keyword id="KW-0687">Ribonucleoprotein</keyword>
<keyword id="KW-0689">Ribosomal protein</keyword>
<proteinExistence type="inferred from homology"/>
<organism>
    <name type="scientific">Levilactobacillus brevis (strain ATCC 367 / BCRC 12310 / CIP 105137 / JCM 1170 / LMG 11437 / NCIMB 947 / NCTC 947)</name>
    <name type="common">Lactobacillus brevis</name>
    <dbReference type="NCBI Taxonomy" id="387344"/>
    <lineage>
        <taxon>Bacteria</taxon>
        <taxon>Bacillati</taxon>
        <taxon>Bacillota</taxon>
        <taxon>Bacilli</taxon>
        <taxon>Lactobacillales</taxon>
        <taxon>Lactobacillaceae</taxon>
        <taxon>Levilactobacillus</taxon>
    </lineage>
</organism>
<feature type="chain" id="PRO_0000356493" description="Large ribosomal subunit protein bL33A">
    <location>
        <begin position="1"/>
        <end position="49"/>
    </location>
</feature>
<comment type="similarity">
    <text evidence="1">Belongs to the bacterial ribosomal protein bL33 family.</text>
</comment>
<accession>Q03SU2</accession>
<protein>
    <recommendedName>
        <fullName evidence="1">Large ribosomal subunit protein bL33A</fullName>
    </recommendedName>
    <alternativeName>
        <fullName evidence="1">50S ribosomal protein L33 1</fullName>
    </alternativeName>
</protein>
<dbReference type="EMBL" id="CP000416">
    <property type="protein sequence ID" value="ABJ63730.1"/>
    <property type="molecule type" value="Genomic_DNA"/>
</dbReference>
<dbReference type="SMR" id="Q03SU2"/>
<dbReference type="STRING" id="387344.LVIS_0585"/>
<dbReference type="KEGG" id="lbr:LVIS_0585"/>
<dbReference type="eggNOG" id="COG0267">
    <property type="taxonomic scope" value="Bacteria"/>
</dbReference>
<dbReference type="HOGENOM" id="CLU_190949_0_1_9"/>
<dbReference type="Proteomes" id="UP000001652">
    <property type="component" value="Chromosome"/>
</dbReference>
<dbReference type="GO" id="GO:0005737">
    <property type="term" value="C:cytoplasm"/>
    <property type="evidence" value="ECO:0007669"/>
    <property type="project" value="UniProtKB-ARBA"/>
</dbReference>
<dbReference type="GO" id="GO:1990904">
    <property type="term" value="C:ribonucleoprotein complex"/>
    <property type="evidence" value="ECO:0007669"/>
    <property type="project" value="UniProtKB-KW"/>
</dbReference>
<dbReference type="GO" id="GO:0005840">
    <property type="term" value="C:ribosome"/>
    <property type="evidence" value="ECO:0007669"/>
    <property type="project" value="UniProtKB-KW"/>
</dbReference>
<dbReference type="GO" id="GO:0003735">
    <property type="term" value="F:structural constituent of ribosome"/>
    <property type="evidence" value="ECO:0007669"/>
    <property type="project" value="InterPro"/>
</dbReference>
<dbReference type="GO" id="GO:0006412">
    <property type="term" value="P:translation"/>
    <property type="evidence" value="ECO:0007669"/>
    <property type="project" value="UniProtKB-UniRule"/>
</dbReference>
<dbReference type="Gene3D" id="2.20.28.120">
    <property type="entry name" value="Ribosomal protein L33"/>
    <property type="match status" value="1"/>
</dbReference>
<dbReference type="HAMAP" id="MF_00294">
    <property type="entry name" value="Ribosomal_bL33"/>
    <property type="match status" value="1"/>
</dbReference>
<dbReference type="InterPro" id="IPR001705">
    <property type="entry name" value="Ribosomal_bL33"/>
</dbReference>
<dbReference type="InterPro" id="IPR038584">
    <property type="entry name" value="Ribosomal_bL33_sf"/>
</dbReference>
<dbReference type="InterPro" id="IPR011332">
    <property type="entry name" value="Ribosomal_zn-bd"/>
</dbReference>
<dbReference type="NCBIfam" id="NF001764">
    <property type="entry name" value="PRK00504.1"/>
    <property type="match status" value="1"/>
</dbReference>
<dbReference type="NCBIfam" id="TIGR01023">
    <property type="entry name" value="rpmG_bact"/>
    <property type="match status" value="1"/>
</dbReference>
<dbReference type="Pfam" id="PF00471">
    <property type="entry name" value="Ribosomal_L33"/>
    <property type="match status" value="1"/>
</dbReference>
<dbReference type="SUPFAM" id="SSF57829">
    <property type="entry name" value="Zn-binding ribosomal proteins"/>
    <property type="match status" value="1"/>
</dbReference>
<sequence length="49" mass="5605">MAQRKIALACSVCGSRNYTITASATRTKRLEVMKFCKFCGKHTLHRETR</sequence>